<reference key="1">
    <citation type="journal article" date="2009" name="PLoS Genet.">
        <title>The complete genome and proteome of Laribacter hongkongensis reveal potential mechanisms for adaptations to different temperatures and habitats.</title>
        <authorList>
            <person name="Woo P.C.Y."/>
            <person name="Lau S.K.P."/>
            <person name="Tse H."/>
            <person name="Teng J.L.L."/>
            <person name="Curreem S.O."/>
            <person name="Tsang A.K.L."/>
            <person name="Fan R.Y.Y."/>
            <person name="Wong G.K.M."/>
            <person name="Huang Y."/>
            <person name="Loman N.J."/>
            <person name="Snyder L.A.S."/>
            <person name="Cai J.J."/>
            <person name="Huang J.-D."/>
            <person name="Mak W."/>
            <person name="Pallen M.J."/>
            <person name="Lok S."/>
            <person name="Yuen K.-Y."/>
        </authorList>
    </citation>
    <scope>NUCLEOTIDE SEQUENCE [LARGE SCALE GENOMIC DNA]</scope>
    <source>
        <strain>HLHK9</strain>
    </source>
</reference>
<gene>
    <name evidence="1" type="primary">pyrB</name>
    <name type="ordered locus">LHK_00010</name>
</gene>
<protein>
    <recommendedName>
        <fullName evidence="1">Aspartate carbamoyltransferase catalytic subunit</fullName>
        <ecNumber evidence="1">2.1.3.2</ecNumber>
    </recommendedName>
    <alternativeName>
        <fullName evidence="1">Aspartate transcarbamylase</fullName>
        <shortName evidence="1">ATCase</shortName>
    </alternativeName>
</protein>
<comment type="function">
    <text evidence="1">Catalyzes the condensation of carbamoyl phosphate and aspartate to form carbamoyl aspartate and inorganic phosphate, the committed step in the de novo pyrimidine nucleotide biosynthesis pathway.</text>
</comment>
<comment type="catalytic activity">
    <reaction evidence="1">
        <text>carbamoyl phosphate + L-aspartate = N-carbamoyl-L-aspartate + phosphate + H(+)</text>
        <dbReference type="Rhea" id="RHEA:20013"/>
        <dbReference type="ChEBI" id="CHEBI:15378"/>
        <dbReference type="ChEBI" id="CHEBI:29991"/>
        <dbReference type="ChEBI" id="CHEBI:32814"/>
        <dbReference type="ChEBI" id="CHEBI:43474"/>
        <dbReference type="ChEBI" id="CHEBI:58228"/>
        <dbReference type="EC" id="2.1.3.2"/>
    </reaction>
</comment>
<comment type="pathway">
    <text evidence="1">Pyrimidine metabolism; UMP biosynthesis via de novo pathway; (S)-dihydroorotate from bicarbonate: step 2/3.</text>
</comment>
<comment type="subunit">
    <text evidence="1">Heterododecamer (2C3:3R2) of six catalytic PyrB chains organized as two trimers (C3), and six regulatory PyrI chains organized as three dimers (R2).</text>
</comment>
<comment type="similarity">
    <text evidence="1">Belongs to the aspartate/ornithine carbamoyltransferase superfamily. ATCase family.</text>
</comment>
<name>PYRB_LARHH</name>
<keyword id="KW-0665">Pyrimidine biosynthesis</keyword>
<keyword id="KW-1185">Reference proteome</keyword>
<keyword id="KW-0808">Transferase</keyword>
<proteinExistence type="inferred from homology"/>
<evidence type="ECO:0000255" key="1">
    <source>
        <dbReference type="HAMAP-Rule" id="MF_00001"/>
    </source>
</evidence>
<accession>C1D9A7</accession>
<feature type="chain" id="PRO_1000116146" description="Aspartate carbamoyltransferase catalytic subunit">
    <location>
        <begin position="1"/>
        <end position="308"/>
    </location>
</feature>
<feature type="binding site" evidence="1">
    <location>
        <position position="55"/>
    </location>
    <ligand>
        <name>carbamoyl phosphate</name>
        <dbReference type="ChEBI" id="CHEBI:58228"/>
    </ligand>
</feature>
<feature type="binding site" evidence="1">
    <location>
        <position position="56"/>
    </location>
    <ligand>
        <name>carbamoyl phosphate</name>
        <dbReference type="ChEBI" id="CHEBI:58228"/>
    </ligand>
</feature>
<feature type="binding site" evidence="1">
    <location>
        <position position="85"/>
    </location>
    <ligand>
        <name>L-aspartate</name>
        <dbReference type="ChEBI" id="CHEBI:29991"/>
    </ligand>
</feature>
<feature type="binding site" evidence="1">
    <location>
        <position position="106"/>
    </location>
    <ligand>
        <name>carbamoyl phosphate</name>
        <dbReference type="ChEBI" id="CHEBI:58228"/>
    </ligand>
</feature>
<feature type="binding site" evidence="1">
    <location>
        <position position="135"/>
    </location>
    <ligand>
        <name>carbamoyl phosphate</name>
        <dbReference type="ChEBI" id="CHEBI:58228"/>
    </ligand>
</feature>
<feature type="binding site" evidence="1">
    <location>
        <position position="138"/>
    </location>
    <ligand>
        <name>carbamoyl phosphate</name>
        <dbReference type="ChEBI" id="CHEBI:58228"/>
    </ligand>
</feature>
<feature type="binding site" evidence="1">
    <location>
        <position position="168"/>
    </location>
    <ligand>
        <name>L-aspartate</name>
        <dbReference type="ChEBI" id="CHEBI:29991"/>
    </ligand>
</feature>
<feature type="binding site" evidence="1">
    <location>
        <position position="229"/>
    </location>
    <ligand>
        <name>L-aspartate</name>
        <dbReference type="ChEBI" id="CHEBI:29991"/>
    </ligand>
</feature>
<feature type="binding site" evidence="1">
    <location>
        <position position="267"/>
    </location>
    <ligand>
        <name>carbamoyl phosphate</name>
        <dbReference type="ChEBI" id="CHEBI:58228"/>
    </ligand>
</feature>
<feature type="binding site" evidence="1">
    <location>
        <position position="268"/>
    </location>
    <ligand>
        <name>carbamoyl phosphate</name>
        <dbReference type="ChEBI" id="CHEBI:58228"/>
    </ligand>
</feature>
<sequence length="308" mass="34577">MKNSLYQRHIISISDLNREELEMVVKVAGDLKRTPRHELLKNKVVASCFFEASTRTRLSFETAVQRLGGTVIGFSDGGNTSLAKKGETLADSVQIITSYVDAYVMRHPQEGAARLASMFSNGKPVINGGDGSNQHPTQTLLDLFSIYETQGRLDGLKVAFVGDLKYGRTVHSLAQALSLFGCRFYFIAPEALAMPEYICEELDDKGIEYSLHTSIEEVVGELDILYMTRVQKERFDETEFKHMKSKFVLNVDTLKGAQDNLRILHPLPRVDEIAIEVDHTPYAYYFQQAENGVYAREALLALVLNETI</sequence>
<dbReference type="EC" id="2.1.3.2" evidence="1"/>
<dbReference type="EMBL" id="CP001154">
    <property type="protein sequence ID" value="ACO73006.1"/>
    <property type="molecule type" value="Genomic_DNA"/>
</dbReference>
<dbReference type="RefSeq" id="WP_012695501.1">
    <property type="nucleotide sequence ID" value="NC_012559.1"/>
</dbReference>
<dbReference type="SMR" id="C1D9A7"/>
<dbReference type="STRING" id="557598.LHK_00010"/>
<dbReference type="GeneID" id="75109691"/>
<dbReference type="KEGG" id="lhk:LHK_00010"/>
<dbReference type="eggNOG" id="COG0540">
    <property type="taxonomic scope" value="Bacteria"/>
</dbReference>
<dbReference type="HOGENOM" id="CLU_043846_1_2_4"/>
<dbReference type="UniPathway" id="UPA00070">
    <property type="reaction ID" value="UER00116"/>
</dbReference>
<dbReference type="Proteomes" id="UP000002010">
    <property type="component" value="Chromosome"/>
</dbReference>
<dbReference type="GO" id="GO:0005829">
    <property type="term" value="C:cytosol"/>
    <property type="evidence" value="ECO:0007669"/>
    <property type="project" value="TreeGrafter"/>
</dbReference>
<dbReference type="GO" id="GO:0016597">
    <property type="term" value="F:amino acid binding"/>
    <property type="evidence" value="ECO:0007669"/>
    <property type="project" value="InterPro"/>
</dbReference>
<dbReference type="GO" id="GO:0004070">
    <property type="term" value="F:aspartate carbamoyltransferase activity"/>
    <property type="evidence" value="ECO:0007669"/>
    <property type="project" value="UniProtKB-UniRule"/>
</dbReference>
<dbReference type="GO" id="GO:0006207">
    <property type="term" value="P:'de novo' pyrimidine nucleobase biosynthetic process"/>
    <property type="evidence" value="ECO:0007669"/>
    <property type="project" value="InterPro"/>
</dbReference>
<dbReference type="GO" id="GO:0044205">
    <property type="term" value="P:'de novo' UMP biosynthetic process"/>
    <property type="evidence" value="ECO:0007669"/>
    <property type="project" value="UniProtKB-UniRule"/>
</dbReference>
<dbReference type="GO" id="GO:0006520">
    <property type="term" value="P:amino acid metabolic process"/>
    <property type="evidence" value="ECO:0007669"/>
    <property type="project" value="InterPro"/>
</dbReference>
<dbReference type="FunFam" id="3.40.50.1370:FF:000001">
    <property type="entry name" value="Aspartate carbamoyltransferase"/>
    <property type="match status" value="1"/>
</dbReference>
<dbReference type="FunFam" id="3.40.50.1370:FF:000002">
    <property type="entry name" value="Aspartate carbamoyltransferase 2"/>
    <property type="match status" value="1"/>
</dbReference>
<dbReference type="Gene3D" id="3.40.50.1370">
    <property type="entry name" value="Aspartate/ornithine carbamoyltransferase"/>
    <property type="match status" value="2"/>
</dbReference>
<dbReference type="HAMAP" id="MF_00001">
    <property type="entry name" value="Asp_carb_tr"/>
    <property type="match status" value="1"/>
</dbReference>
<dbReference type="InterPro" id="IPR006132">
    <property type="entry name" value="Asp/Orn_carbamoyltranf_P-bd"/>
</dbReference>
<dbReference type="InterPro" id="IPR006130">
    <property type="entry name" value="Asp/Orn_carbamoylTrfase"/>
</dbReference>
<dbReference type="InterPro" id="IPR036901">
    <property type="entry name" value="Asp/Orn_carbamoylTrfase_sf"/>
</dbReference>
<dbReference type="InterPro" id="IPR002082">
    <property type="entry name" value="Asp_carbamoyltransf"/>
</dbReference>
<dbReference type="InterPro" id="IPR006131">
    <property type="entry name" value="Asp_carbamoyltransf_Asp/Orn-bd"/>
</dbReference>
<dbReference type="NCBIfam" id="TIGR00670">
    <property type="entry name" value="asp_carb_tr"/>
    <property type="match status" value="1"/>
</dbReference>
<dbReference type="NCBIfam" id="NF002032">
    <property type="entry name" value="PRK00856.1"/>
    <property type="match status" value="1"/>
</dbReference>
<dbReference type="PANTHER" id="PTHR45753:SF6">
    <property type="entry name" value="ASPARTATE CARBAMOYLTRANSFERASE"/>
    <property type="match status" value="1"/>
</dbReference>
<dbReference type="PANTHER" id="PTHR45753">
    <property type="entry name" value="ORNITHINE CARBAMOYLTRANSFERASE, MITOCHONDRIAL"/>
    <property type="match status" value="1"/>
</dbReference>
<dbReference type="Pfam" id="PF00185">
    <property type="entry name" value="OTCace"/>
    <property type="match status" value="1"/>
</dbReference>
<dbReference type="Pfam" id="PF02729">
    <property type="entry name" value="OTCace_N"/>
    <property type="match status" value="1"/>
</dbReference>
<dbReference type="PRINTS" id="PR00100">
    <property type="entry name" value="AOTCASE"/>
</dbReference>
<dbReference type="PRINTS" id="PR00101">
    <property type="entry name" value="ATCASE"/>
</dbReference>
<dbReference type="SUPFAM" id="SSF53671">
    <property type="entry name" value="Aspartate/ornithine carbamoyltransferase"/>
    <property type="match status" value="1"/>
</dbReference>
<dbReference type="PROSITE" id="PS00097">
    <property type="entry name" value="CARBAMOYLTRANSFERASE"/>
    <property type="match status" value="1"/>
</dbReference>
<organism>
    <name type="scientific">Laribacter hongkongensis (strain HLHK9)</name>
    <dbReference type="NCBI Taxonomy" id="557598"/>
    <lineage>
        <taxon>Bacteria</taxon>
        <taxon>Pseudomonadati</taxon>
        <taxon>Pseudomonadota</taxon>
        <taxon>Betaproteobacteria</taxon>
        <taxon>Neisseriales</taxon>
        <taxon>Aquaspirillaceae</taxon>
        <taxon>Laribacter</taxon>
    </lineage>
</organism>